<comment type="function">
    <text evidence="1">Member of the two-component regulatory system NreB/NreC involved in the control of dissimilatory nitrate/nitrite reduction in response to oxygen. NreB functions as a direct oxygen sensor histidine kinase which is autophosphorylated, in the absence of oxygen, probably at the conserved histidine residue, and transfers its phosphate group probably to a conserved aspartate residue of NreC. NreB/NreC activates the expression of the nitrate (narGHJI) and nitrite (nir) reductase operons, as well as the putative nitrate transporter gene narT (By similarity).</text>
</comment>
<comment type="catalytic activity">
    <reaction>
        <text>ATP + protein L-histidine = ADP + protein N-phospho-L-histidine.</text>
        <dbReference type="EC" id="2.7.13.3"/>
    </reaction>
</comment>
<comment type="cofactor">
    <cofactor evidence="4">
        <name>[4Fe-4S] cluster</name>
        <dbReference type="ChEBI" id="CHEBI:49883"/>
    </cofactor>
    <text evidence="4">Binds 1 [4Fe-4S] cluster.</text>
</comment>
<comment type="subcellular location">
    <subcellularLocation>
        <location evidence="4">Cytoplasm</location>
    </subcellularLocation>
</comment>
<comment type="PTM">
    <text evidence="1">Autophosphorylated.</text>
</comment>
<accession>A6U4C1</accession>
<gene>
    <name type="primary">nreB</name>
    <name type="ordered locus">SaurJH1_2464</name>
</gene>
<proteinExistence type="inferred from homology"/>
<name>NREB_STAA2</name>
<keyword id="KW-0004">4Fe-4S</keyword>
<keyword id="KW-0067">ATP-binding</keyword>
<keyword id="KW-0963">Cytoplasm</keyword>
<keyword id="KW-0408">Iron</keyword>
<keyword id="KW-0411">Iron-sulfur</keyword>
<keyword id="KW-0418">Kinase</keyword>
<keyword id="KW-0479">Metal-binding</keyword>
<keyword id="KW-0547">Nucleotide-binding</keyword>
<keyword id="KW-0597">Phosphoprotein</keyword>
<keyword id="KW-0808">Transferase</keyword>
<keyword id="KW-0902">Two-component regulatory system</keyword>
<dbReference type="EC" id="2.7.13.3"/>
<dbReference type="EMBL" id="CP000736">
    <property type="protein sequence ID" value="ABR53289.1"/>
    <property type="molecule type" value="Genomic_DNA"/>
</dbReference>
<dbReference type="SMR" id="A6U4C1"/>
<dbReference type="KEGG" id="sah:SaurJH1_2464"/>
<dbReference type="HOGENOM" id="CLU_000445_114_0_9"/>
<dbReference type="GO" id="GO:0005737">
    <property type="term" value="C:cytoplasm"/>
    <property type="evidence" value="ECO:0007669"/>
    <property type="project" value="UniProtKB-SubCell"/>
</dbReference>
<dbReference type="GO" id="GO:0016020">
    <property type="term" value="C:membrane"/>
    <property type="evidence" value="ECO:0007669"/>
    <property type="project" value="InterPro"/>
</dbReference>
<dbReference type="GO" id="GO:0051539">
    <property type="term" value="F:4 iron, 4 sulfur cluster binding"/>
    <property type="evidence" value="ECO:0007669"/>
    <property type="project" value="UniProtKB-KW"/>
</dbReference>
<dbReference type="GO" id="GO:0005524">
    <property type="term" value="F:ATP binding"/>
    <property type="evidence" value="ECO:0007669"/>
    <property type="project" value="UniProtKB-KW"/>
</dbReference>
<dbReference type="GO" id="GO:0005506">
    <property type="term" value="F:iron ion binding"/>
    <property type="evidence" value="ECO:0007669"/>
    <property type="project" value="InterPro"/>
</dbReference>
<dbReference type="GO" id="GO:0000155">
    <property type="term" value="F:phosphorelay sensor kinase activity"/>
    <property type="evidence" value="ECO:0007669"/>
    <property type="project" value="InterPro"/>
</dbReference>
<dbReference type="GO" id="GO:0046983">
    <property type="term" value="F:protein dimerization activity"/>
    <property type="evidence" value="ECO:0007669"/>
    <property type="project" value="InterPro"/>
</dbReference>
<dbReference type="CDD" id="cd16917">
    <property type="entry name" value="HATPase_UhpB-NarQ-NarX-like"/>
    <property type="match status" value="1"/>
</dbReference>
<dbReference type="Gene3D" id="1.20.5.1930">
    <property type="match status" value="1"/>
</dbReference>
<dbReference type="Gene3D" id="3.30.565.10">
    <property type="entry name" value="Histidine kinase-like ATPase, C-terminal domain"/>
    <property type="match status" value="1"/>
</dbReference>
<dbReference type="InterPro" id="IPR036890">
    <property type="entry name" value="HATPase_C_sf"/>
</dbReference>
<dbReference type="InterPro" id="IPR005467">
    <property type="entry name" value="His_kinase_dom"/>
</dbReference>
<dbReference type="InterPro" id="IPR050482">
    <property type="entry name" value="Sensor_HK_TwoCompSys"/>
</dbReference>
<dbReference type="InterPro" id="IPR004358">
    <property type="entry name" value="Sig_transdc_His_kin-like_C"/>
</dbReference>
<dbReference type="InterPro" id="IPR011712">
    <property type="entry name" value="Sig_transdc_His_kin_sub3_dim/P"/>
</dbReference>
<dbReference type="InterPro" id="IPR017203">
    <property type="entry name" value="Sig_transdc_His_kinase_NreB"/>
</dbReference>
<dbReference type="PANTHER" id="PTHR24421">
    <property type="entry name" value="NITRATE/NITRITE SENSOR PROTEIN NARX-RELATED"/>
    <property type="match status" value="1"/>
</dbReference>
<dbReference type="PANTHER" id="PTHR24421:SF10">
    <property type="entry name" value="NITRATE_NITRITE SENSOR PROTEIN NARQ"/>
    <property type="match status" value="1"/>
</dbReference>
<dbReference type="Pfam" id="PF02518">
    <property type="entry name" value="HATPase_c"/>
    <property type="match status" value="1"/>
</dbReference>
<dbReference type="Pfam" id="PF07730">
    <property type="entry name" value="HisKA_3"/>
    <property type="match status" value="1"/>
</dbReference>
<dbReference type="PIRSF" id="PIRSF037432">
    <property type="entry name" value="STHK_NreB"/>
    <property type="match status" value="1"/>
</dbReference>
<dbReference type="PRINTS" id="PR00344">
    <property type="entry name" value="BCTRLSENSOR"/>
</dbReference>
<dbReference type="SMART" id="SM00387">
    <property type="entry name" value="HATPase_c"/>
    <property type="match status" value="1"/>
</dbReference>
<dbReference type="SUPFAM" id="SSF55874">
    <property type="entry name" value="ATPase domain of HSP90 chaperone/DNA topoisomerase II/histidine kinase"/>
    <property type="match status" value="1"/>
</dbReference>
<dbReference type="PROSITE" id="PS50109">
    <property type="entry name" value="HIS_KIN"/>
    <property type="match status" value="1"/>
</dbReference>
<protein>
    <recommendedName>
        <fullName>Oxygen sensor histidine kinase NreB</fullName>
        <ecNumber>2.7.13.3</ecNumber>
    </recommendedName>
    <alternativeName>
        <fullName>Nitrogen regulation protein B</fullName>
    </alternativeName>
</protein>
<feature type="chain" id="PRO_0000349326" description="Oxygen sensor histidine kinase NreB">
    <location>
        <begin position="1"/>
        <end position="344"/>
    </location>
</feature>
<feature type="domain" description="Histidine kinase" evidence="3">
    <location>
        <begin position="152"/>
        <end position="344"/>
    </location>
</feature>
<feature type="binding site" evidence="2">
    <location>
        <position position="58"/>
    </location>
    <ligand>
        <name>[4Fe-4S] cluster</name>
        <dbReference type="ChEBI" id="CHEBI:49883"/>
    </ligand>
</feature>
<feature type="binding site" evidence="2">
    <location>
        <position position="61"/>
    </location>
    <ligand>
        <name>[4Fe-4S] cluster</name>
        <dbReference type="ChEBI" id="CHEBI:49883"/>
    </ligand>
</feature>
<feature type="binding site" evidence="2">
    <location>
        <position position="73"/>
    </location>
    <ligand>
        <name>[4Fe-4S] cluster</name>
        <dbReference type="ChEBI" id="CHEBI:49883"/>
    </ligand>
</feature>
<feature type="binding site" evidence="2">
    <location>
        <position position="76"/>
    </location>
    <ligand>
        <name>[4Fe-4S] cluster</name>
        <dbReference type="ChEBI" id="CHEBI:49883"/>
    </ligand>
</feature>
<feature type="modified residue" description="Phosphohistidine; by autocatalysis" evidence="3">
    <location>
        <position position="158"/>
    </location>
</feature>
<sequence>MINEDSIQLDTLLKKYYEHSIEKIVFADDNGKIIAMNDAAKDILSEEDNYSAVANAICHRCEGYTNAYDVQSCKDCFLESMQVQATNFQVFMKTKDQKVMPFTATYQLIDQDRGIHAFTLQNVSSQIEQQEKLHQQRMMRKTISAQENERKRISRELHDSVIQEMLNVDVQLRLLKYQEDTTKLLEDAENIEYIVAKLIDDIRNMSVELRPASLDDLGLEAAFKSYFKQFEENYGIKIIYTSNIKNTRFDSDIETVVYRVVQEAILNALKYADVNEINVGIRQTGRHLVAEVIDAGNGFDPSSKPKGSGLGLYGMNERAELVSGSVNIETKIGEGTNVTLNIPI</sequence>
<reference key="1">
    <citation type="submission" date="2007-06" db="EMBL/GenBank/DDBJ databases">
        <title>Complete sequence of chromosome of Staphylococcus aureus subsp. aureus JH1.</title>
        <authorList>
            <consortium name="US DOE Joint Genome Institute"/>
            <person name="Copeland A."/>
            <person name="Lucas S."/>
            <person name="Lapidus A."/>
            <person name="Barry K."/>
            <person name="Detter J.C."/>
            <person name="Glavina del Rio T."/>
            <person name="Hammon N."/>
            <person name="Israni S."/>
            <person name="Dalin E."/>
            <person name="Tice H."/>
            <person name="Pitluck S."/>
            <person name="Chain P."/>
            <person name="Malfatti S."/>
            <person name="Shin M."/>
            <person name="Vergez L."/>
            <person name="Schmutz J."/>
            <person name="Larimer F."/>
            <person name="Land M."/>
            <person name="Hauser L."/>
            <person name="Kyrpides N."/>
            <person name="Ivanova N."/>
            <person name="Tomasz A."/>
            <person name="Richardson P."/>
        </authorList>
    </citation>
    <scope>NUCLEOTIDE SEQUENCE [LARGE SCALE GENOMIC DNA]</scope>
    <source>
        <strain>JH1</strain>
    </source>
</reference>
<evidence type="ECO:0000250" key="1"/>
<evidence type="ECO:0000255" key="2"/>
<evidence type="ECO:0000255" key="3">
    <source>
        <dbReference type="PROSITE-ProRule" id="PRU00107"/>
    </source>
</evidence>
<evidence type="ECO:0000305" key="4"/>
<organism>
    <name type="scientific">Staphylococcus aureus (strain JH1)</name>
    <dbReference type="NCBI Taxonomy" id="359787"/>
    <lineage>
        <taxon>Bacteria</taxon>
        <taxon>Bacillati</taxon>
        <taxon>Bacillota</taxon>
        <taxon>Bacilli</taxon>
        <taxon>Bacillales</taxon>
        <taxon>Staphylococcaceae</taxon>
        <taxon>Staphylococcus</taxon>
    </lineage>
</organism>